<sequence>MDGFFWKTWLVVAALAIGGTSSLPHKPLTYEEAVDLAVSTYNGKSGEESLYRLLEAVPPPKWDPLSESNQELNLTIKETVCLVAEERSLEECDFQDDGAVMGCTGYFFFGESPPVLVLTCEPLGEDEEQNQEEEEEEEKEEDEKDQPRRVKRFKKFFRKLKKSVKKRVKKFFKKPRVIGVTIPF</sequence>
<reference key="1">
    <citation type="journal article" date="2014" name="Amino Acids">
        <title>Vipericidins: a novel family of cathelicidin-related peptides from the venom gland of South American pit vipers.</title>
        <authorList>
            <person name="Falcao C.B."/>
            <person name="de La Torre B.G."/>
            <person name="Perez-Peinado C."/>
            <person name="Barron A.E."/>
            <person name="Andreu D."/>
            <person name="Radis-Baptista G."/>
        </authorList>
    </citation>
    <scope>NUCLEOTIDE SEQUENCE [MRNA]</scope>
    <source>
        <tissue>Venom gland</tissue>
    </source>
</reference>
<feature type="signal peptide" evidence="3">
    <location>
        <begin position="1"/>
        <end position="22"/>
    </location>
</feature>
<feature type="propeptide" id="PRO_0000432142" evidence="7">
    <location>
        <begin position="23"/>
        <end position="150"/>
    </location>
</feature>
<feature type="peptide" id="PRO_0000432143" description="Cathelicidin-related peptide Pt_CRAMP2" evidence="7">
    <location>
        <begin position="151"/>
        <end position="184"/>
    </location>
</feature>
<feature type="region of interest" description="Disordered" evidence="4">
    <location>
        <begin position="125"/>
        <end position="147"/>
    </location>
</feature>
<feature type="compositionally biased region" description="Acidic residues" evidence="4">
    <location>
        <begin position="125"/>
        <end position="144"/>
    </location>
</feature>
<feature type="disulfide bond" evidence="1">
    <location>
        <begin position="81"/>
        <end position="92"/>
    </location>
</feature>
<feature type="disulfide bond" evidence="1">
    <location>
        <begin position="103"/>
        <end position="120"/>
    </location>
</feature>
<proteinExistence type="evidence at transcript level"/>
<comment type="function">
    <text evidence="2">Potent antimicrobial peptide against most of Gram-negative bacteria, some Gram-positive bacteria (Bacillus) and some fungi (C.albicans, P.pastoris, A.terreus, A.nidulans, and C.globosum). Adopts an amphipathic alpha helical conformation, that may allow to partition into the target membrane. No hemolytic and cytotoxic activities have been observed on mammalian cells.</text>
</comment>
<comment type="subcellular location">
    <subcellularLocation>
        <location evidence="2">Secreted</location>
    </subcellularLocation>
    <subcellularLocation>
        <location evidence="2">Target cell membrane</location>
    </subcellularLocation>
    <text evidence="2">Forms a helical membrane channel in the prey.</text>
</comment>
<comment type="tissue specificity">
    <text evidence="6">Expressed by the venom gland.</text>
</comment>
<comment type="miscellaneous">
    <text evidence="7">The putative mature sequence has been predicted by AMPA, a predictive algorithm for identification of peptide stretches with antimicrobial properties.</text>
</comment>
<comment type="similarity">
    <text evidence="6">Belongs to the cathelicidin family.</text>
</comment>
<evidence type="ECO:0000250" key="1"/>
<evidence type="ECO:0000250" key="2">
    <source>
        <dbReference type="UniProtKB" id="B6D434"/>
    </source>
</evidence>
<evidence type="ECO:0000255" key="3"/>
<evidence type="ECO:0000256" key="4">
    <source>
        <dbReference type="SAM" id="MobiDB-lite"/>
    </source>
</evidence>
<evidence type="ECO:0000303" key="5">
    <source>
    </source>
</evidence>
<evidence type="ECO:0000305" key="6"/>
<evidence type="ECO:0000305" key="7">
    <source>
    </source>
</evidence>
<keyword id="KW-0044">Antibiotic</keyword>
<keyword id="KW-0929">Antimicrobial</keyword>
<keyword id="KW-0165">Cleavage on pair of basic residues</keyword>
<keyword id="KW-1015">Disulfide bond</keyword>
<keyword id="KW-0472">Membrane</keyword>
<keyword id="KW-1185">Reference proteome</keyword>
<keyword id="KW-0964">Secreted</keyword>
<keyword id="KW-0732">Signal</keyword>
<keyword id="KW-1052">Target cell membrane</keyword>
<keyword id="KW-1053">Target membrane</keyword>
<protein>
    <recommendedName>
        <fullName evidence="5">Cathelicidin-related peptide Pt_CRAMP2</fullName>
    </recommendedName>
    <alternativeName>
        <fullName evidence="5">Cathelicidin-related antimicrobial peptide</fullName>
        <shortName evidence="5">CRAMP</shortName>
    </alternativeName>
    <alternativeName>
        <fullName evidence="5">Vipericidin</fullName>
    </alternativeName>
</protein>
<accession>U5KJM6</accession>
<name>CAMP2_PSETE</name>
<organism>
    <name type="scientific">Pseudonaja textilis</name>
    <name type="common">Eastern brown snake</name>
    <dbReference type="NCBI Taxonomy" id="8673"/>
    <lineage>
        <taxon>Eukaryota</taxon>
        <taxon>Metazoa</taxon>
        <taxon>Chordata</taxon>
        <taxon>Craniata</taxon>
        <taxon>Vertebrata</taxon>
        <taxon>Euteleostomi</taxon>
        <taxon>Lepidosauria</taxon>
        <taxon>Squamata</taxon>
        <taxon>Bifurcata</taxon>
        <taxon>Unidentata</taxon>
        <taxon>Episquamata</taxon>
        <taxon>Toxicofera</taxon>
        <taxon>Serpentes</taxon>
        <taxon>Colubroidea</taxon>
        <taxon>Elapidae</taxon>
        <taxon>Hydrophiinae</taxon>
        <taxon>Pseudonaja</taxon>
    </lineage>
</organism>
<dbReference type="EMBL" id="JX948114">
    <property type="protein sequence ID" value="AGS36143.1"/>
    <property type="molecule type" value="mRNA"/>
</dbReference>
<dbReference type="SMR" id="U5KJM6"/>
<dbReference type="Proteomes" id="UP000472273">
    <property type="component" value="Unplaced"/>
</dbReference>
<dbReference type="GO" id="GO:0005615">
    <property type="term" value="C:extracellular space"/>
    <property type="evidence" value="ECO:0007669"/>
    <property type="project" value="TreeGrafter"/>
</dbReference>
<dbReference type="GO" id="GO:0016020">
    <property type="term" value="C:membrane"/>
    <property type="evidence" value="ECO:0007669"/>
    <property type="project" value="UniProtKB-KW"/>
</dbReference>
<dbReference type="GO" id="GO:0044218">
    <property type="term" value="C:other organism cell membrane"/>
    <property type="evidence" value="ECO:0007669"/>
    <property type="project" value="UniProtKB-KW"/>
</dbReference>
<dbReference type="GO" id="GO:0042742">
    <property type="term" value="P:defense response to bacterium"/>
    <property type="evidence" value="ECO:0007669"/>
    <property type="project" value="UniProtKB-KW"/>
</dbReference>
<dbReference type="FunFam" id="3.10.450.10:FF:000034">
    <property type="entry name" value="Cathelicidin-related peptide Oh-Cath"/>
    <property type="match status" value="1"/>
</dbReference>
<dbReference type="Gene3D" id="3.10.450.10">
    <property type="match status" value="1"/>
</dbReference>
<dbReference type="InterPro" id="IPR001894">
    <property type="entry name" value="Cathelicidin-like"/>
</dbReference>
<dbReference type="InterPro" id="IPR046350">
    <property type="entry name" value="Cystatin_sf"/>
</dbReference>
<dbReference type="PANTHER" id="PTHR10206">
    <property type="entry name" value="CATHELICIDIN"/>
    <property type="match status" value="1"/>
</dbReference>
<dbReference type="PANTHER" id="PTHR10206:SF4">
    <property type="entry name" value="NEUTROPHILIC GRANULE PROTEIN"/>
    <property type="match status" value="1"/>
</dbReference>
<dbReference type="Pfam" id="PF00666">
    <property type="entry name" value="Cathelicidins"/>
    <property type="match status" value="1"/>
</dbReference>
<dbReference type="SUPFAM" id="SSF54403">
    <property type="entry name" value="Cystatin/monellin"/>
    <property type="match status" value="1"/>
</dbReference>